<feature type="chain" id="PRO_0000116707" description="Uncharacterized protein C17A5.05c">
    <location>
        <begin position="1"/>
        <end position="247"/>
    </location>
</feature>
<protein>
    <recommendedName>
        <fullName>Uncharacterized protein C17A5.05c</fullName>
    </recommendedName>
</protein>
<dbReference type="EMBL" id="CU329670">
    <property type="protein sequence ID" value="CAB11505.1"/>
    <property type="molecule type" value="Genomic_DNA"/>
</dbReference>
<dbReference type="PIR" id="T37820">
    <property type="entry name" value="T37820"/>
</dbReference>
<dbReference type="RefSeq" id="NP_593473.1">
    <property type="nucleotide sequence ID" value="NM_001018906.1"/>
</dbReference>
<dbReference type="BioGRID" id="278906">
    <property type="interactions" value="10"/>
</dbReference>
<dbReference type="PaxDb" id="4896-SPAC17A5.05c.1"/>
<dbReference type="EnsemblFungi" id="SPAC17A5.05c.1">
    <property type="protein sequence ID" value="SPAC17A5.05c.1:pep"/>
    <property type="gene ID" value="SPAC17A5.05c"/>
</dbReference>
<dbReference type="KEGG" id="spo:2542444"/>
<dbReference type="PomBase" id="SPAC17A5.05c"/>
<dbReference type="VEuPathDB" id="FungiDB:SPAC17A5.05c"/>
<dbReference type="eggNOG" id="ENOG502S1UM">
    <property type="taxonomic scope" value="Eukaryota"/>
</dbReference>
<dbReference type="HOGENOM" id="CLU_067896_0_0_1"/>
<dbReference type="InParanoid" id="O13767"/>
<dbReference type="OMA" id="IKETWGW"/>
<dbReference type="PRO" id="PR:O13767"/>
<dbReference type="Proteomes" id="UP000002485">
    <property type="component" value="Chromosome I"/>
</dbReference>
<dbReference type="GO" id="GO:0005829">
    <property type="term" value="C:cytosol"/>
    <property type="evidence" value="ECO:0007005"/>
    <property type="project" value="PomBase"/>
</dbReference>
<dbReference type="GO" id="GO:0005634">
    <property type="term" value="C:nucleus"/>
    <property type="evidence" value="ECO:0007005"/>
    <property type="project" value="PomBase"/>
</dbReference>
<dbReference type="GO" id="GO:0008168">
    <property type="term" value="F:methyltransferase activity"/>
    <property type="evidence" value="ECO:0000318"/>
    <property type="project" value="GO_Central"/>
</dbReference>
<dbReference type="Gene3D" id="3.40.50.150">
    <property type="entry name" value="Vaccinia Virus protein VP39"/>
    <property type="match status" value="1"/>
</dbReference>
<dbReference type="InterPro" id="IPR029063">
    <property type="entry name" value="SAM-dependent_MTases_sf"/>
</dbReference>
<dbReference type="SUPFAM" id="SSF53335">
    <property type="entry name" value="S-adenosyl-L-methionine-dependent methyltransferases"/>
    <property type="match status" value="1"/>
</dbReference>
<name>YE95_SCHPO</name>
<sequence length="247" mass="28325">MSWRPTHSVRNAPYSMRDNYAQGVDVYYKKVGGTYRNLHFRGLRLLLLQCLSHFWDHDEKFKSHGLHVIDLACGSGEVSETVIEWEHLGRELGIHGGAFKVRKEISIRSIPPELPPFELIATDPFTLEAYTNRIGKPCLTLNFQDIADEKLPPSSAEDGIYDLVICSFALHLLTEPSKLFSTCYALSVQCRWLLVLGPHKKPELKPEWGWDAWNIDTWCPLGYGISHDYVLERVHARFFKSRNLIDG</sequence>
<accession>O13767</accession>
<reference key="1">
    <citation type="journal article" date="2002" name="Nature">
        <title>The genome sequence of Schizosaccharomyces pombe.</title>
        <authorList>
            <person name="Wood V."/>
            <person name="Gwilliam R."/>
            <person name="Rajandream M.A."/>
            <person name="Lyne M.H."/>
            <person name="Lyne R."/>
            <person name="Stewart A."/>
            <person name="Sgouros J.G."/>
            <person name="Peat N."/>
            <person name="Hayles J."/>
            <person name="Baker S.G."/>
            <person name="Basham D."/>
            <person name="Bowman S."/>
            <person name="Brooks K."/>
            <person name="Brown D."/>
            <person name="Brown S."/>
            <person name="Chillingworth T."/>
            <person name="Churcher C.M."/>
            <person name="Collins M."/>
            <person name="Connor R."/>
            <person name="Cronin A."/>
            <person name="Davis P."/>
            <person name="Feltwell T."/>
            <person name="Fraser A."/>
            <person name="Gentles S."/>
            <person name="Goble A."/>
            <person name="Hamlin N."/>
            <person name="Harris D.E."/>
            <person name="Hidalgo J."/>
            <person name="Hodgson G."/>
            <person name="Holroyd S."/>
            <person name="Hornsby T."/>
            <person name="Howarth S."/>
            <person name="Huckle E.J."/>
            <person name="Hunt S."/>
            <person name="Jagels K."/>
            <person name="James K.D."/>
            <person name="Jones L."/>
            <person name="Jones M."/>
            <person name="Leather S."/>
            <person name="McDonald S."/>
            <person name="McLean J."/>
            <person name="Mooney P."/>
            <person name="Moule S."/>
            <person name="Mungall K.L."/>
            <person name="Murphy L.D."/>
            <person name="Niblett D."/>
            <person name="Odell C."/>
            <person name="Oliver K."/>
            <person name="O'Neil S."/>
            <person name="Pearson D."/>
            <person name="Quail M.A."/>
            <person name="Rabbinowitsch E."/>
            <person name="Rutherford K.M."/>
            <person name="Rutter S."/>
            <person name="Saunders D."/>
            <person name="Seeger K."/>
            <person name="Sharp S."/>
            <person name="Skelton J."/>
            <person name="Simmonds M.N."/>
            <person name="Squares R."/>
            <person name="Squares S."/>
            <person name="Stevens K."/>
            <person name="Taylor K."/>
            <person name="Taylor R.G."/>
            <person name="Tivey A."/>
            <person name="Walsh S.V."/>
            <person name="Warren T."/>
            <person name="Whitehead S."/>
            <person name="Woodward J.R."/>
            <person name="Volckaert G."/>
            <person name="Aert R."/>
            <person name="Robben J."/>
            <person name="Grymonprez B."/>
            <person name="Weltjens I."/>
            <person name="Vanstreels E."/>
            <person name="Rieger M."/>
            <person name="Schaefer M."/>
            <person name="Mueller-Auer S."/>
            <person name="Gabel C."/>
            <person name="Fuchs M."/>
            <person name="Duesterhoeft A."/>
            <person name="Fritzc C."/>
            <person name="Holzer E."/>
            <person name="Moestl D."/>
            <person name="Hilbert H."/>
            <person name="Borzym K."/>
            <person name="Langer I."/>
            <person name="Beck A."/>
            <person name="Lehrach H."/>
            <person name="Reinhardt R."/>
            <person name="Pohl T.M."/>
            <person name="Eger P."/>
            <person name="Zimmermann W."/>
            <person name="Wedler H."/>
            <person name="Wambutt R."/>
            <person name="Purnelle B."/>
            <person name="Goffeau A."/>
            <person name="Cadieu E."/>
            <person name="Dreano S."/>
            <person name="Gloux S."/>
            <person name="Lelaure V."/>
            <person name="Mottier S."/>
            <person name="Galibert F."/>
            <person name="Aves S.J."/>
            <person name="Xiang Z."/>
            <person name="Hunt C."/>
            <person name="Moore K."/>
            <person name="Hurst S.M."/>
            <person name="Lucas M."/>
            <person name="Rochet M."/>
            <person name="Gaillardin C."/>
            <person name="Tallada V.A."/>
            <person name="Garzon A."/>
            <person name="Thode G."/>
            <person name="Daga R.R."/>
            <person name="Cruzado L."/>
            <person name="Jimenez J."/>
            <person name="Sanchez M."/>
            <person name="del Rey F."/>
            <person name="Benito J."/>
            <person name="Dominguez A."/>
            <person name="Revuelta J.L."/>
            <person name="Moreno S."/>
            <person name="Armstrong J."/>
            <person name="Forsburg S.L."/>
            <person name="Cerutti L."/>
            <person name="Lowe T."/>
            <person name="McCombie W.R."/>
            <person name="Paulsen I."/>
            <person name="Potashkin J."/>
            <person name="Shpakovski G.V."/>
            <person name="Ussery D."/>
            <person name="Barrell B.G."/>
            <person name="Nurse P."/>
        </authorList>
    </citation>
    <scope>NUCLEOTIDE SEQUENCE [LARGE SCALE GENOMIC DNA]</scope>
    <source>
        <strain>972 / ATCC 24843</strain>
    </source>
</reference>
<organism>
    <name type="scientific">Schizosaccharomyces pombe (strain 972 / ATCC 24843)</name>
    <name type="common">Fission yeast</name>
    <dbReference type="NCBI Taxonomy" id="284812"/>
    <lineage>
        <taxon>Eukaryota</taxon>
        <taxon>Fungi</taxon>
        <taxon>Dikarya</taxon>
        <taxon>Ascomycota</taxon>
        <taxon>Taphrinomycotina</taxon>
        <taxon>Schizosaccharomycetes</taxon>
        <taxon>Schizosaccharomycetales</taxon>
        <taxon>Schizosaccharomycetaceae</taxon>
        <taxon>Schizosaccharomyces</taxon>
    </lineage>
</organism>
<proteinExistence type="predicted"/>
<keyword id="KW-1185">Reference proteome</keyword>
<gene>
    <name type="ORF">SPAC17A5.05c</name>
</gene>